<protein>
    <recommendedName>
        <fullName evidence="1">Aspartate 1-decarboxylase</fullName>
        <ecNumber evidence="1">4.1.1.11</ecNumber>
    </recommendedName>
    <alternativeName>
        <fullName evidence="1">Aspartate alpha-decarboxylase</fullName>
    </alternativeName>
    <component>
        <recommendedName>
            <fullName evidence="1">Aspartate 1-decarboxylase beta chain</fullName>
        </recommendedName>
    </component>
    <component>
        <recommendedName>
            <fullName evidence="1">Aspartate 1-decarboxylase alpha chain</fullName>
        </recommendedName>
    </component>
</protein>
<feature type="chain" id="PRO_0000023105" description="Aspartate 1-decarboxylase beta chain" evidence="1">
    <location>
        <begin position="1"/>
        <end position="24"/>
    </location>
</feature>
<feature type="chain" id="PRO_0000023106" description="Aspartate 1-decarboxylase alpha chain" evidence="1">
    <location>
        <begin position="25"/>
        <end position="127"/>
    </location>
</feature>
<feature type="active site" description="Schiff-base intermediate with substrate; via pyruvic acid" evidence="1">
    <location>
        <position position="25"/>
    </location>
</feature>
<feature type="active site" description="Proton donor" evidence="1">
    <location>
        <position position="58"/>
    </location>
</feature>
<feature type="binding site" evidence="1">
    <location>
        <position position="57"/>
    </location>
    <ligand>
        <name>substrate</name>
    </ligand>
</feature>
<feature type="binding site" evidence="1">
    <location>
        <begin position="73"/>
        <end position="75"/>
    </location>
    <ligand>
        <name>substrate</name>
    </ligand>
</feature>
<feature type="modified residue" description="Pyruvic acid (Ser)" evidence="1">
    <location>
        <position position="25"/>
    </location>
</feature>
<gene>
    <name evidence="1" type="primary">panD</name>
    <name type="ordered locus">lin2014</name>
</gene>
<keyword id="KW-0068">Autocatalytic cleavage</keyword>
<keyword id="KW-0963">Cytoplasm</keyword>
<keyword id="KW-0210">Decarboxylase</keyword>
<keyword id="KW-0456">Lyase</keyword>
<keyword id="KW-0566">Pantothenate biosynthesis</keyword>
<keyword id="KW-0670">Pyruvate</keyword>
<keyword id="KW-0704">Schiff base</keyword>
<keyword id="KW-0865">Zymogen</keyword>
<comment type="function">
    <text evidence="1">Catalyzes the pyruvoyl-dependent decarboxylation of aspartate to produce beta-alanine.</text>
</comment>
<comment type="catalytic activity">
    <reaction evidence="1">
        <text>L-aspartate + H(+) = beta-alanine + CO2</text>
        <dbReference type="Rhea" id="RHEA:19497"/>
        <dbReference type="ChEBI" id="CHEBI:15378"/>
        <dbReference type="ChEBI" id="CHEBI:16526"/>
        <dbReference type="ChEBI" id="CHEBI:29991"/>
        <dbReference type="ChEBI" id="CHEBI:57966"/>
        <dbReference type="EC" id="4.1.1.11"/>
    </reaction>
</comment>
<comment type="cofactor">
    <cofactor evidence="1">
        <name>pyruvate</name>
        <dbReference type="ChEBI" id="CHEBI:15361"/>
    </cofactor>
    <text evidence="1">Binds 1 pyruvoyl group covalently per subunit.</text>
</comment>
<comment type="pathway">
    <text evidence="1">Cofactor biosynthesis; (R)-pantothenate biosynthesis; beta-alanine from L-aspartate: step 1/1.</text>
</comment>
<comment type="subunit">
    <text evidence="1">Heterooctamer of four alpha and four beta subunits.</text>
</comment>
<comment type="subcellular location">
    <subcellularLocation>
        <location evidence="1">Cytoplasm</location>
    </subcellularLocation>
</comment>
<comment type="PTM">
    <text evidence="1">Is synthesized initially as an inactive proenzyme, which is activated by self-cleavage at a specific serine bond to produce a beta-subunit with a hydroxyl group at its C-terminus and an alpha-subunit with a pyruvoyl group at its N-terminus.</text>
</comment>
<comment type="similarity">
    <text evidence="1">Belongs to the PanD family.</text>
</comment>
<sequence>MFRTMMNGKIHRATVTEANLNYVGSITIDSAILEAVDMLPNEKVQIVNNNNGARIETYIIPGEPGSGVICLNGAAARHVQVGDVVIIMSYGMFTSEEAKTHEPKIVVLDEKNHIEMILPEEKAHTTL</sequence>
<accession>Q92AA8</accession>
<organism>
    <name type="scientific">Listeria innocua serovar 6a (strain ATCC BAA-680 / CLIP 11262)</name>
    <dbReference type="NCBI Taxonomy" id="272626"/>
    <lineage>
        <taxon>Bacteria</taxon>
        <taxon>Bacillati</taxon>
        <taxon>Bacillota</taxon>
        <taxon>Bacilli</taxon>
        <taxon>Bacillales</taxon>
        <taxon>Listeriaceae</taxon>
        <taxon>Listeria</taxon>
    </lineage>
</organism>
<evidence type="ECO:0000255" key="1">
    <source>
        <dbReference type="HAMAP-Rule" id="MF_00446"/>
    </source>
</evidence>
<reference key="1">
    <citation type="journal article" date="2001" name="Science">
        <title>Comparative genomics of Listeria species.</title>
        <authorList>
            <person name="Glaser P."/>
            <person name="Frangeul L."/>
            <person name="Buchrieser C."/>
            <person name="Rusniok C."/>
            <person name="Amend A."/>
            <person name="Baquero F."/>
            <person name="Berche P."/>
            <person name="Bloecker H."/>
            <person name="Brandt P."/>
            <person name="Chakraborty T."/>
            <person name="Charbit A."/>
            <person name="Chetouani F."/>
            <person name="Couve E."/>
            <person name="de Daruvar A."/>
            <person name="Dehoux P."/>
            <person name="Domann E."/>
            <person name="Dominguez-Bernal G."/>
            <person name="Duchaud E."/>
            <person name="Durant L."/>
            <person name="Dussurget O."/>
            <person name="Entian K.-D."/>
            <person name="Fsihi H."/>
            <person name="Garcia-del Portillo F."/>
            <person name="Garrido P."/>
            <person name="Gautier L."/>
            <person name="Goebel W."/>
            <person name="Gomez-Lopez N."/>
            <person name="Hain T."/>
            <person name="Hauf J."/>
            <person name="Jackson D."/>
            <person name="Jones L.-M."/>
            <person name="Kaerst U."/>
            <person name="Kreft J."/>
            <person name="Kuhn M."/>
            <person name="Kunst F."/>
            <person name="Kurapkat G."/>
            <person name="Madueno E."/>
            <person name="Maitournam A."/>
            <person name="Mata Vicente J."/>
            <person name="Ng E."/>
            <person name="Nedjari H."/>
            <person name="Nordsiek G."/>
            <person name="Novella S."/>
            <person name="de Pablos B."/>
            <person name="Perez-Diaz J.-C."/>
            <person name="Purcell R."/>
            <person name="Remmel B."/>
            <person name="Rose M."/>
            <person name="Schlueter T."/>
            <person name="Simoes N."/>
            <person name="Tierrez A."/>
            <person name="Vazquez-Boland J.-A."/>
            <person name="Voss H."/>
            <person name="Wehland J."/>
            <person name="Cossart P."/>
        </authorList>
    </citation>
    <scope>NUCLEOTIDE SEQUENCE [LARGE SCALE GENOMIC DNA]</scope>
    <source>
        <strain>ATCC BAA-680 / CLIP 11262</strain>
    </source>
</reference>
<name>PAND_LISIN</name>
<proteinExistence type="inferred from homology"/>
<dbReference type="EC" id="4.1.1.11" evidence="1"/>
<dbReference type="EMBL" id="AL596170">
    <property type="protein sequence ID" value="CAC97244.1"/>
    <property type="molecule type" value="Genomic_DNA"/>
</dbReference>
<dbReference type="PIR" id="AD1684">
    <property type="entry name" value="AD1684"/>
</dbReference>
<dbReference type="RefSeq" id="WP_003763077.1">
    <property type="nucleotide sequence ID" value="NC_003212.1"/>
</dbReference>
<dbReference type="SMR" id="Q92AA8"/>
<dbReference type="STRING" id="272626.gene:17566372"/>
<dbReference type="GeneID" id="93235352"/>
<dbReference type="KEGG" id="lin:panD"/>
<dbReference type="eggNOG" id="COG0853">
    <property type="taxonomic scope" value="Bacteria"/>
</dbReference>
<dbReference type="HOGENOM" id="CLU_115305_2_0_9"/>
<dbReference type="OrthoDB" id="9803983at2"/>
<dbReference type="UniPathway" id="UPA00028">
    <property type="reaction ID" value="UER00002"/>
</dbReference>
<dbReference type="Proteomes" id="UP000002513">
    <property type="component" value="Chromosome"/>
</dbReference>
<dbReference type="GO" id="GO:0005829">
    <property type="term" value="C:cytosol"/>
    <property type="evidence" value="ECO:0007669"/>
    <property type="project" value="TreeGrafter"/>
</dbReference>
<dbReference type="GO" id="GO:0004068">
    <property type="term" value="F:aspartate 1-decarboxylase activity"/>
    <property type="evidence" value="ECO:0007669"/>
    <property type="project" value="UniProtKB-UniRule"/>
</dbReference>
<dbReference type="GO" id="GO:0006523">
    <property type="term" value="P:alanine biosynthetic process"/>
    <property type="evidence" value="ECO:0007669"/>
    <property type="project" value="InterPro"/>
</dbReference>
<dbReference type="GO" id="GO:0015940">
    <property type="term" value="P:pantothenate biosynthetic process"/>
    <property type="evidence" value="ECO:0007669"/>
    <property type="project" value="UniProtKB-UniRule"/>
</dbReference>
<dbReference type="CDD" id="cd06919">
    <property type="entry name" value="Asp_decarbox"/>
    <property type="match status" value="1"/>
</dbReference>
<dbReference type="Gene3D" id="2.40.40.20">
    <property type="match status" value="1"/>
</dbReference>
<dbReference type="HAMAP" id="MF_00446">
    <property type="entry name" value="PanD"/>
    <property type="match status" value="1"/>
</dbReference>
<dbReference type="InterPro" id="IPR009010">
    <property type="entry name" value="Asp_de-COase-like_dom_sf"/>
</dbReference>
<dbReference type="InterPro" id="IPR003190">
    <property type="entry name" value="Asp_decarbox"/>
</dbReference>
<dbReference type="NCBIfam" id="TIGR00223">
    <property type="entry name" value="panD"/>
    <property type="match status" value="1"/>
</dbReference>
<dbReference type="PANTHER" id="PTHR21012">
    <property type="entry name" value="ASPARTATE 1-DECARBOXYLASE"/>
    <property type="match status" value="1"/>
</dbReference>
<dbReference type="PANTHER" id="PTHR21012:SF0">
    <property type="entry name" value="ASPARTATE 1-DECARBOXYLASE"/>
    <property type="match status" value="1"/>
</dbReference>
<dbReference type="Pfam" id="PF02261">
    <property type="entry name" value="Asp_decarbox"/>
    <property type="match status" value="1"/>
</dbReference>
<dbReference type="PIRSF" id="PIRSF006246">
    <property type="entry name" value="Asp_decarbox"/>
    <property type="match status" value="1"/>
</dbReference>
<dbReference type="SUPFAM" id="SSF50692">
    <property type="entry name" value="ADC-like"/>
    <property type="match status" value="1"/>
</dbReference>